<protein>
    <recommendedName>
        <fullName evidence="7">Kunitz-type serine protease inhibitor isoform 5</fullName>
    </recommendedName>
</protein>
<feature type="signal peptide" evidence="2">
    <location>
        <begin position="1"/>
        <end position="24"/>
    </location>
</feature>
<feature type="chain" id="PRO_5003073632" description="Kunitz-type serine protease inhibitor isoform 5">
    <location>
        <begin position="25"/>
        <end position="83"/>
    </location>
</feature>
<feature type="domain" description="BPTI/Kunitz inhibitor" evidence="3">
    <location>
        <begin position="31"/>
        <end position="81"/>
    </location>
</feature>
<feature type="disulfide bond" evidence="3">
    <location>
        <begin position="31"/>
        <end position="81"/>
    </location>
</feature>
<feature type="disulfide bond" evidence="3">
    <location>
        <begin position="40"/>
        <end position="64"/>
    </location>
</feature>
<feature type="disulfide bond" evidence="3">
    <location>
        <begin position="56"/>
        <end position="77"/>
    </location>
</feature>
<proteinExistence type="inferred from homology"/>
<comment type="function">
    <text evidence="1">Snake venom serine protease inhibitor.</text>
</comment>
<comment type="subcellular location">
    <subcellularLocation>
        <location evidence="6">Secreted</location>
    </subcellularLocation>
</comment>
<comment type="tissue specificity">
    <text evidence="6">Expressed by the venom gland.</text>
</comment>
<comment type="miscellaneous">
    <text evidence="4">Negative results: does not inhibit vasopressin V2 receptor (V2R/AVPR2).</text>
</comment>
<comment type="similarity">
    <text evidence="5">Belongs to the venom Kunitz-type family.</text>
</comment>
<name>VKT5_BUNFL</name>
<organism>
    <name type="scientific">Bungarus flaviceps flaviceps</name>
    <name type="common">Red-headed krait</name>
    <dbReference type="NCBI Taxonomy" id="8615"/>
    <lineage>
        <taxon>Eukaryota</taxon>
        <taxon>Metazoa</taxon>
        <taxon>Chordata</taxon>
        <taxon>Craniata</taxon>
        <taxon>Vertebrata</taxon>
        <taxon>Euteleostomi</taxon>
        <taxon>Lepidosauria</taxon>
        <taxon>Squamata</taxon>
        <taxon>Bifurcata</taxon>
        <taxon>Unidentata</taxon>
        <taxon>Episquamata</taxon>
        <taxon>Toxicofera</taxon>
        <taxon>Serpentes</taxon>
        <taxon>Colubroidea</taxon>
        <taxon>Elapidae</taxon>
        <taxon>Bungarinae</taxon>
        <taxon>Bungarus</taxon>
    </lineage>
</organism>
<keyword id="KW-1015">Disulfide bond</keyword>
<keyword id="KW-0646">Protease inhibitor</keyword>
<keyword id="KW-0964">Secreted</keyword>
<keyword id="KW-0722">Serine protease inhibitor</keyword>
<keyword id="KW-0732">Signal</keyword>
<keyword id="KW-0800">Toxin</keyword>
<dbReference type="EMBL" id="GU190809">
    <property type="protein sequence ID" value="ADF50029.1"/>
    <property type="molecule type" value="mRNA"/>
</dbReference>
<dbReference type="SMR" id="D5J9Q8"/>
<dbReference type="GO" id="GO:0005615">
    <property type="term" value="C:extracellular space"/>
    <property type="evidence" value="ECO:0007669"/>
    <property type="project" value="TreeGrafter"/>
</dbReference>
<dbReference type="GO" id="GO:0004867">
    <property type="term" value="F:serine-type endopeptidase inhibitor activity"/>
    <property type="evidence" value="ECO:0007669"/>
    <property type="project" value="UniProtKB-KW"/>
</dbReference>
<dbReference type="GO" id="GO:0090729">
    <property type="term" value="F:toxin activity"/>
    <property type="evidence" value="ECO:0007669"/>
    <property type="project" value="UniProtKB-KW"/>
</dbReference>
<dbReference type="CDD" id="cd22594">
    <property type="entry name" value="Kunitz_textilinin-like"/>
    <property type="match status" value="1"/>
</dbReference>
<dbReference type="FunFam" id="4.10.410.10:FF:000020">
    <property type="entry name" value="Collagen, type VI, alpha 3"/>
    <property type="match status" value="1"/>
</dbReference>
<dbReference type="Gene3D" id="4.10.410.10">
    <property type="entry name" value="Pancreatic trypsin inhibitor Kunitz domain"/>
    <property type="match status" value="1"/>
</dbReference>
<dbReference type="InterPro" id="IPR002223">
    <property type="entry name" value="Kunitz_BPTI"/>
</dbReference>
<dbReference type="InterPro" id="IPR036880">
    <property type="entry name" value="Kunitz_BPTI_sf"/>
</dbReference>
<dbReference type="InterPro" id="IPR020901">
    <property type="entry name" value="Prtase_inh_Kunz-CS"/>
</dbReference>
<dbReference type="InterPro" id="IPR050098">
    <property type="entry name" value="TFPI/VKTCI-like"/>
</dbReference>
<dbReference type="PANTHER" id="PTHR10083:SF383">
    <property type="entry name" value="BPTI_KUNITZ INHIBITOR DOMAIN-CONTAINING PROTEIN"/>
    <property type="match status" value="1"/>
</dbReference>
<dbReference type="PANTHER" id="PTHR10083">
    <property type="entry name" value="KUNITZ-TYPE PROTEASE INHIBITOR-RELATED"/>
    <property type="match status" value="1"/>
</dbReference>
<dbReference type="Pfam" id="PF00014">
    <property type="entry name" value="Kunitz_BPTI"/>
    <property type="match status" value="1"/>
</dbReference>
<dbReference type="PRINTS" id="PR00759">
    <property type="entry name" value="BASICPTASE"/>
</dbReference>
<dbReference type="SMART" id="SM00131">
    <property type="entry name" value="KU"/>
    <property type="match status" value="1"/>
</dbReference>
<dbReference type="SUPFAM" id="SSF57362">
    <property type="entry name" value="BPTI-like"/>
    <property type="match status" value="1"/>
</dbReference>
<dbReference type="PROSITE" id="PS00280">
    <property type="entry name" value="BPTI_KUNITZ_1"/>
    <property type="match status" value="1"/>
</dbReference>
<dbReference type="PROSITE" id="PS50279">
    <property type="entry name" value="BPTI_KUNITZ_2"/>
    <property type="match status" value="1"/>
</dbReference>
<reference evidence="7" key="1">
    <citation type="journal article" date="2010" name="BMC Mol. Biol.">
        <title>Transcriptomic analysis of the venom gland of the red-headed krait (Bungarus flaviceps) using expressed sequence tags.</title>
        <authorList>
            <person name="Siang A.S."/>
            <person name="Doley R."/>
            <person name="Vonk F.J."/>
            <person name="Kini R.M."/>
        </authorList>
    </citation>
    <scope>NUCLEOTIDE SEQUENCE [MRNA]</scope>
    <source>
        <tissue>Venom gland</tissue>
    </source>
</reference>
<reference key="2">
    <citation type="journal article" date="2022" name="Br. J. Pharmacol.">
        <title>A new Kunitz-type snake toxin family associated with an original mode of interaction with the vasopressin 2 receptor.</title>
        <authorList>
            <person name="Droctove L."/>
            <person name="Ciolek J."/>
            <person name="Mendre C."/>
            <person name="Chorfa A."/>
            <person name="Huerta P."/>
            <person name="Carvalho C."/>
            <person name="Gouin C."/>
            <person name="Lancien M."/>
            <person name="Stanajic-Petrovic G."/>
            <person name="Braco L."/>
            <person name="Blanchet G."/>
            <person name="Upert G."/>
            <person name="De Pauw G."/>
            <person name="Barbe P."/>
            <person name="Keck M."/>
            <person name="Mourier G."/>
            <person name="Mouillac B."/>
            <person name="Denis S."/>
            <person name="Rodriguez de la Vega R.C."/>
            <person name="Quinton L."/>
            <person name="Gilles N."/>
        </authorList>
    </citation>
    <scope>SYNTHESIS</scope>
</reference>
<accession>D5J9Q8</accession>
<evidence type="ECO:0000250" key="1"/>
<evidence type="ECO:0000255" key="2"/>
<evidence type="ECO:0000255" key="3">
    <source>
        <dbReference type="PROSITE-ProRule" id="PRU00031"/>
    </source>
</evidence>
<evidence type="ECO:0000269" key="4">
    <source>
    </source>
</evidence>
<evidence type="ECO:0000305" key="5"/>
<evidence type="ECO:0000305" key="6">
    <source>
    </source>
</evidence>
<evidence type="ECO:0000312" key="7">
    <source>
        <dbReference type="EMBL" id="ADF50029.1"/>
    </source>
</evidence>
<sequence>MSSGGLLLLLGLLTLWAELTPVSSKDRPKYCNLPPEPGPCHGRKFAFYYHPASNKCKEFVYGGCGGNDNNFKTKDKCQRACSG</sequence>